<name>HEM1_RHIME</name>
<accession>P08080</accession>
<keyword id="KW-0012">Acyltransferase</keyword>
<keyword id="KW-0350">Heme biosynthesis</keyword>
<keyword id="KW-0663">Pyridoxal phosphate</keyword>
<keyword id="KW-1185">Reference proteome</keyword>
<keyword id="KW-0808">Transferase</keyword>
<organism>
    <name type="scientific">Rhizobium meliloti (strain 1021)</name>
    <name type="common">Ensifer meliloti</name>
    <name type="synonym">Sinorhizobium meliloti</name>
    <dbReference type="NCBI Taxonomy" id="266834"/>
    <lineage>
        <taxon>Bacteria</taxon>
        <taxon>Pseudomonadati</taxon>
        <taxon>Pseudomonadota</taxon>
        <taxon>Alphaproteobacteria</taxon>
        <taxon>Hyphomicrobiales</taxon>
        <taxon>Rhizobiaceae</taxon>
        <taxon>Sinorhizobium/Ensifer group</taxon>
        <taxon>Sinorhizobium</taxon>
    </lineage>
</organism>
<gene>
    <name type="primary">hemA</name>
    <name type="ordered locus">R02989</name>
    <name type="ORF">SMc03104</name>
</gene>
<reference key="1">
    <citation type="journal article" date="2001" name="Proc. Natl. Acad. Sci. U.S.A.">
        <title>Analysis of the chromosome sequence of the legume symbiont Sinorhizobium meliloti strain 1021.</title>
        <authorList>
            <person name="Capela D."/>
            <person name="Barloy-Hubler F."/>
            <person name="Gouzy J."/>
            <person name="Bothe G."/>
            <person name="Ampe F."/>
            <person name="Batut J."/>
            <person name="Boistard P."/>
            <person name="Becker A."/>
            <person name="Boutry M."/>
            <person name="Cadieu E."/>
            <person name="Dreano S."/>
            <person name="Gloux S."/>
            <person name="Godrie T."/>
            <person name="Goffeau A."/>
            <person name="Kahn D."/>
            <person name="Kiss E."/>
            <person name="Lelaure V."/>
            <person name="Masuy D."/>
            <person name="Pohl T."/>
            <person name="Portetelle D."/>
            <person name="Puehler A."/>
            <person name="Purnelle B."/>
            <person name="Ramsperger U."/>
            <person name="Renard C."/>
            <person name="Thebault P."/>
            <person name="Vandenbol M."/>
            <person name="Weidner S."/>
            <person name="Galibert F."/>
        </authorList>
    </citation>
    <scope>NUCLEOTIDE SEQUENCE [LARGE SCALE GENOMIC DNA]</scope>
    <source>
        <strain>1021</strain>
    </source>
</reference>
<reference key="2">
    <citation type="journal article" date="2001" name="Science">
        <title>The composite genome of the legume symbiont Sinorhizobium meliloti.</title>
        <authorList>
            <person name="Galibert F."/>
            <person name="Finan T.M."/>
            <person name="Long S.R."/>
            <person name="Puehler A."/>
            <person name="Abola P."/>
            <person name="Ampe F."/>
            <person name="Barloy-Hubler F."/>
            <person name="Barnett M.J."/>
            <person name="Becker A."/>
            <person name="Boistard P."/>
            <person name="Bothe G."/>
            <person name="Boutry M."/>
            <person name="Bowser L."/>
            <person name="Buhrmester J."/>
            <person name="Cadieu E."/>
            <person name="Capela D."/>
            <person name="Chain P."/>
            <person name="Cowie A."/>
            <person name="Davis R.W."/>
            <person name="Dreano S."/>
            <person name="Federspiel N.A."/>
            <person name="Fisher R.F."/>
            <person name="Gloux S."/>
            <person name="Godrie T."/>
            <person name="Goffeau A."/>
            <person name="Golding B."/>
            <person name="Gouzy J."/>
            <person name="Gurjal M."/>
            <person name="Hernandez-Lucas I."/>
            <person name="Hong A."/>
            <person name="Huizar L."/>
            <person name="Hyman R.W."/>
            <person name="Jones T."/>
            <person name="Kahn D."/>
            <person name="Kahn M.L."/>
            <person name="Kalman S."/>
            <person name="Keating D.H."/>
            <person name="Kiss E."/>
            <person name="Komp C."/>
            <person name="Lelaure V."/>
            <person name="Masuy D."/>
            <person name="Palm C."/>
            <person name="Peck M.C."/>
            <person name="Pohl T.M."/>
            <person name="Portetelle D."/>
            <person name="Purnelle B."/>
            <person name="Ramsperger U."/>
            <person name="Surzycki R."/>
            <person name="Thebault P."/>
            <person name="Vandenbol M."/>
            <person name="Vorhoelter F.J."/>
            <person name="Weidner S."/>
            <person name="Wells D.H."/>
            <person name="Wong K."/>
            <person name="Yeh K.-C."/>
            <person name="Batut J."/>
        </authorList>
    </citation>
    <scope>NUCLEOTIDE SEQUENCE [LARGE SCALE GENOMIC DNA]</scope>
    <source>
        <strain>1021</strain>
    </source>
</reference>
<reference key="3">
    <citation type="journal article" date="1985" name="Nucleic Acids Res.">
        <title>Analysis of the 5' regulatory region of the gene for delta-aminolevulinic acid synthetase of Rhizobium meliloti.</title>
        <authorList>
            <person name="Leong S.A."/>
            <person name="Williams P.H."/>
            <person name="Ditta G.S."/>
        </authorList>
    </citation>
    <scope>NUCLEOTIDE SEQUENCE [GENOMIC DNA] OF 1-74</scope>
</reference>
<dbReference type="EC" id="2.3.1.37"/>
<dbReference type="EMBL" id="AL591688">
    <property type="protein sequence ID" value="CAC47568.1"/>
    <property type="status" value="ALT_INIT"/>
    <property type="molecule type" value="Genomic_DNA"/>
</dbReference>
<dbReference type="EMBL" id="X02853">
    <property type="protein sequence ID" value="CAA26610.1"/>
    <property type="status" value="ALT_INIT"/>
    <property type="molecule type" value="Genomic_DNA"/>
</dbReference>
<dbReference type="PIR" id="A24077">
    <property type="entry name" value="A24077"/>
</dbReference>
<dbReference type="RefSeq" id="NP_387095.1">
    <property type="nucleotide sequence ID" value="NC_003047.1"/>
</dbReference>
<dbReference type="RefSeq" id="WP_013844889.1">
    <property type="nucleotide sequence ID" value="NC_003047.1"/>
</dbReference>
<dbReference type="SMR" id="P08080"/>
<dbReference type="EnsemblBacteria" id="CAC47568">
    <property type="protein sequence ID" value="CAC47568"/>
    <property type="gene ID" value="SMc03104"/>
</dbReference>
<dbReference type="KEGG" id="sme:SMc03104"/>
<dbReference type="PATRIC" id="fig|266834.11.peg.4516"/>
<dbReference type="eggNOG" id="COG0156">
    <property type="taxonomic scope" value="Bacteria"/>
</dbReference>
<dbReference type="HOGENOM" id="CLU_015846_11_1_5"/>
<dbReference type="OrthoDB" id="9807157at2"/>
<dbReference type="UniPathway" id="UPA00251">
    <property type="reaction ID" value="UER00375"/>
</dbReference>
<dbReference type="Proteomes" id="UP000001976">
    <property type="component" value="Chromosome"/>
</dbReference>
<dbReference type="GO" id="GO:0003870">
    <property type="term" value="F:5-aminolevulinate synthase activity"/>
    <property type="evidence" value="ECO:0007669"/>
    <property type="project" value="UniProtKB-EC"/>
</dbReference>
<dbReference type="GO" id="GO:0030170">
    <property type="term" value="F:pyridoxal phosphate binding"/>
    <property type="evidence" value="ECO:0007669"/>
    <property type="project" value="InterPro"/>
</dbReference>
<dbReference type="GO" id="GO:0006782">
    <property type="term" value="P:protoporphyrinogen IX biosynthetic process"/>
    <property type="evidence" value="ECO:0007669"/>
    <property type="project" value="UniProtKB-UniPathway"/>
</dbReference>
<dbReference type="CDD" id="cd06454">
    <property type="entry name" value="KBL_like"/>
    <property type="match status" value="1"/>
</dbReference>
<dbReference type="FunFam" id="3.40.640.10:FF:000006">
    <property type="entry name" value="5-aminolevulinate synthase, mitochondrial"/>
    <property type="match status" value="1"/>
</dbReference>
<dbReference type="Gene3D" id="3.90.1150.10">
    <property type="entry name" value="Aspartate Aminotransferase, domain 1"/>
    <property type="match status" value="1"/>
</dbReference>
<dbReference type="Gene3D" id="3.40.640.10">
    <property type="entry name" value="Type I PLP-dependent aspartate aminotransferase-like (Major domain)"/>
    <property type="match status" value="1"/>
</dbReference>
<dbReference type="InterPro" id="IPR010961">
    <property type="entry name" value="4pyrrol_synth_NH2levulA_synth"/>
</dbReference>
<dbReference type="InterPro" id="IPR001917">
    <property type="entry name" value="Aminotrans_II_pyridoxalP_BS"/>
</dbReference>
<dbReference type="InterPro" id="IPR004839">
    <property type="entry name" value="Aminotransferase_I/II_large"/>
</dbReference>
<dbReference type="InterPro" id="IPR050087">
    <property type="entry name" value="AON_synthase_class-II"/>
</dbReference>
<dbReference type="InterPro" id="IPR015424">
    <property type="entry name" value="PyrdxlP-dep_Trfase"/>
</dbReference>
<dbReference type="InterPro" id="IPR015421">
    <property type="entry name" value="PyrdxlP-dep_Trfase_major"/>
</dbReference>
<dbReference type="InterPro" id="IPR015422">
    <property type="entry name" value="PyrdxlP-dep_Trfase_small"/>
</dbReference>
<dbReference type="NCBIfam" id="TIGR01821">
    <property type="entry name" value="5aminolev_synth"/>
    <property type="match status" value="1"/>
</dbReference>
<dbReference type="PANTHER" id="PTHR13693:SF102">
    <property type="entry name" value="2-AMINO-3-KETOBUTYRATE COENZYME A LIGASE, MITOCHONDRIAL"/>
    <property type="match status" value="1"/>
</dbReference>
<dbReference type="PANTHER" id="PTHR13693">
    <property type="entry name" value="CLASS II AMINOTRANSFERASE/8-AMINO-7-OXONONANOATE SYNTHASE"/>
    <property type="match status" value="1"/>
</dbReference>
<dbReference type="Pfam" id="PF00155">
    <property type="entry name" value="Aminotran_1_2"/>
    <property type="match status" value="1"/>
</dbReference>
<dbReference type="SUPFAM" id="SSF53383">
    <property type="entry name" value="PLP-dependent transferases"/>
    <property type="match status" value="1"/>
</dbReference>
<dbReference type="PROSITE" id="PS00599">
    <property type="entry name" value="AA_TRANSFER_CLASS_2"/>
    <property type="match status" value="1"/>
</dbReference>
<proteinExistence type="inferred from homology"/>
<sequence>MDFESFFKNELDGLHQEGRYRVFADLARHRGSFPKATRYTADGAQEVTVWCSNDYLGMGQCPIVTEAMKNAIDECGAGAGGTRNISGTNHYHVLLERELADLHGKESALLFTSGYVSNWAALGTLCSKIPGVIVFSDAGNHASMIEGIRHSKCERVIFKHNSVADLEAKLAAADPRAPKIIAFESVYSMDGDIAPIREFCDLADKYGAMTYLDEVHAVGMYGPRGGGIAEREGLMHRLTVIEGTLGKAFGVMGGYITGSAALCDFIRSFASGFIFTTALPPALAAGALASIRHLKESQVERFAHQERVRRLRSLLDQRGIPHMVNPSHIVPVIVGDAAKCKWISDLLLDNFGIYVQPINYPTVPKKTERLRITPTPMHSDADIDHLVSALHSLWSRCALARAVA</sequence>
<protein>
    <recommendedName>
        <fullName>5-aminolevulinate synthase</fullName>
        <ecNumber>2.3.1.37</ecNumber>
    </recommendedName>
    <alternativeName>
        <fullName>5-aminolevulinic acid synthase</fullName>
    </alternativeName>
    <alternativeName>
        <fullName>Delta-ALA synthase</fullName>
    </alternativeName>
    <alternativeName>
        <fullName>Delta-aminolevulinate synthase</fullName>
    </alternativeName>
</protein>
<feature type="chain" id="PRO_0000163827" description="5-aminolevulinate synthase">
    <location>
        <begin position="1"/>
        <end position="404"/>
    </location>
</feature>
<feature type="active site" evidence="1">
    <location>
        <position position="247"/>
    </location>
</feature>
<feature type="binding site" evidence="1">
    <location>
        <position position="21"/>
    </location>
    <ligand>
        <name>substrate</name>
    </ligand>
</feature>
<feature type="binding site" evidence="1">
    <location>
        <position position="136"/>
    </location>
    <ligand>
        <name>substrate</name>
    </ligand>
</feature>
<feature type="binding site" description="in other chain" evidence="1">
    <location>
        <position position="188"/>
    </location>
    <ligand>
        <name>pyridoxal 5'-phosphate</name>
        <dbReference type="ChEBI" id="CHEBI:597326"/>
        <note>ligand shared between dimeric partners</note>
    </ligand>
</feature>
<feature type="binding site" description="in other chain" evidence="1">
    <location>
        <position position="216"/>
    </location>
    <ligand>
        <name>pyridoxal 5'-phosphate</name>
        <dbReference type="ChEBI" id="CHEBI:597326"/>
        <note>ligand shared between dimeric partners</note>
    </ligand>
</feature>
<feature type="binding site" description="in other chain" evidence="1">
    <location>
        <position position="244"/>
    </location>
    <ligand>
        <name>pyridoxal 5'-phosphate</name>
        <dbReference type="ChEBI" id="CHEBI:597326"/>
        <note>ligand shared between dimeric partners</note>
    </ligand>
</feature>
<feature type="binding site" evidence="1">
    <location>
        <position position="276"/>
    </location>
    <ligand>
        <name>pyridoxal 5'-phosphate</name>
        <dbReference type="ChEBI" id="CHEBI:597326"/>
        <note>ligand shared between dimeric partners</note>
    </ligand>
</feature>
<feature type="binding site" evidence="1">
    <location>
        <position position="277"/>
    </location>
    <ligand>
        <name>pyridoxal 5'-phosphate</name>
        <dbReference type="ChEBI" id="CHEBI:597326"/>
        <note>ligand shared between dimeric partners</note>
    </ligand>
</feature>
<feature type="binding site" evidence="1">
    <location>
        <position position="362"/>
    </location>
    <ligand>
        <name>substrate</name>
    </ligand>
</feature>
<feature type="modified residue" description="N6-(pyridoxal phosphate)lysine" evidence="1">
    <location>
        <position position="247"/>
    </location>
</feature>
<comment type="catalytic activity">
    <reaction>
        <text>succinyl-CoA + glycine + H(+) = 5-aminolevulinate + CO2 + CoA</text>
        <dbReference type="Rhea" id="RHEA:12921"/>
        <dbReference type="ChEBI" id="CHEBI:15378"/>
        <dbReference type="ChEBI" id="CHEBI:16526"/>
        <dbReference type="ChEBI" id="CHEBI:57287"/>
        <dbReference type="ChEBI" id="CHEBI:57292"/>
        <dbReference type="ChEBI" id="CHEBI:57305"/>
        <dbReference type="ChEBI" id="CHEBI:356416"/>
        <dbReference type="EC" id="2.3.1.37"/>
    </reaction>
</comment>
<comment type="cofactor">
    <cofactor evidence="1">
        <name>pyridoxal 5'-phosphate</name>
        <dbReference type="ChEBI" id="CHEBI:597326"/>
    </cofactor>
</comment>
<comment type="pathway">
    <text>Porphyrin-containing compound metabolism; protoporphyrin-IX biosynthesis; 5-aminolevulinate from glycine: step 1/1.</text>
</comment>
<comment type="subunit">
    <text evidence="1">Homodimer.</text>
</comment>
<comment type="similarity">
    <text evidence="2">Belongs to the class-II pyridoxal-phosphate-dependent aminotransferase family.</text>
</comment>
<comment type="sequence caution" evidence="2">
    <conflict type="erroneous initiation">
        <sequence resource="EMBL-CDS" id="CAA26610"/>
    </conflict>
</comment>
<comment type="sequence caution" evidence="2">
    <conflict type="erroneous initiation">
        <sequence resource="EMBL-CDS" id="CAC47568"/>
    </conflict>
</comment>
<evidence type="ECO:0000250" key="1">
    <source>
        <dbReference type="UniProtKB" id="P18079"/>
    </source>
</evidence>
<evidence type="ECO:0000305" key="2"/>